<keyword id="KW-0349">Heme</keyword>
<keyword id="KW-0408">Iron</keyword>
<keyword id="KW-0472">Membrane</keyword>
<keyword id="KW-0479">Metal-binding</keyword>
<keyword id="KW-0503">Monooxygenase</keyword>
<keyword id="KW-0560">Oxidoreductase</keyword>
<keyword id="KW-1185">Reference proteome</keyword>
<keyword id="KW-0812">Transmembrane</keyword>
<keyword id="KW-1133">Transmembrane helix</keyword>
<protein>
    <recommendedName>
        <fullName evidence="4">Cytochrome P450 monooxygenase 521A1</fullName>
        <ecNumber evidence="3">1.14.-.-</ecNumber>
    </recommendedName>
    <alternativeName>
        <fullName evidence="4">Discodiene biosynthesis cluster protein cyp521A1</fullName>
    </alternativeName>
</protein>
<evidence type="ECO:0000250" key="1">
    <source>
        <dbReference type="UniProtKB" id="P04798"/>
    </source>
</evidence>
<evidence type="ECO:0000255" key="2"/>
<evidence type="ECO:0000269" key="3">
    <source>
    </source>
</evidence>
<evidence type="ECO:0000303" key="4">
    <source>
    </source>
</evidence>
<evidence type="ECO:0000305" key="5"/>
<reference key="1">
    <citation type="journal article" date="2005" name="Nature">
        <title>The genome of the social amoeba Dictyostelium discoideum.</title>
        <authorList>
            <person name="Eichinger L."/>
            <person name="Pachebat J.A."/>
            <person name="Gloeckner G."/>
            <person name="Rajandream M.A."/>
            <person name="Sucgang R."/>
            <person name="Berriman M."/>
            <person name="Song J."/>
            <person name="Olsen R."/>
            <person name="Szafranski K."/>
            <person name="Xu Q."/>
            <person name="Tunggal B."/>
            <person name="Kummerfeld S."/>
            <person name="Madera M."/>
            <person name="Konfortov B.A."/>
            <person name="Rivero F."/>
            <person name="Bankier A.T."/>
            <person name="Lehmann R."/>
            <person name="Hamlin N."/>
            <person name="Davies R."/>
            <person name="Gaudet P."/>
            <person name="Fey P."/>
            <person name="Pilcher K."/>
            <person name="Chen G."/>
            <person name="Saunders D."/>
            <person name="Sodergren E.J."/>
            <person name="Davis P."/>
            <person name="Kerhornou A."/>
            <person name="Nie X."/>
            <person name="Hall N."/>
            <person name="Anjard C."/>
            <person name="Hemphill L."/>
            <person name="Bason N."/>
            <person name="Farbrother P."/>
            <person name="Desany B."/>
            <person name="Just E."/>
            <person name="Morio T."/>
            <person name="Rost R."/>
            <person name="Churcher C.M."/>
            <person name="Cooper J."/>
            <person name="Haydock S."/>
            <person name="van Driessche N."/>
            <person name="Cronin A."/>
            <person name="Goodhead I."/>
            <person name="Muzny D.M."/>
            <person name="Mourier T."/>
            <person name="Pain A."/>
            <person name="Lu M."/>
            <person name="Harper D."/>
            <person name="Lindsay R."/>
            <person name="Hauser H."/>
            <person name="James K.D."/>
            <person name="Quiles M."/>
            <person name="Madan Babu M."/>
            <person name="Saito T."/>
            <person name="Buchrieser C."/>
            <person name="Wardroper A."/>
            <person name="Felder M."/>
            <person name="Thangavelu M."/>
            <person name="Johnson D."/>
            <person name="Knights A."/>
            <person name="Loulseged H."/>
            <person name="Mungall K.L."/>
            <person name="Oliver K."/>
            <person name="Price C."/>
            <person name="Quail M.A."/>
            <person name="Urushihara H."/>
            <person name="Hernandez J."/>
            <person name="Rabbinowitsch E."/>
            <person name="Steffen D."/>
            <person name="Sanders M."/>
            <person name="Ma J."/>
            <person name="Kohara Y."/>
            <person name="Sharp S."/>
            <person name="Simmonds M.N."/>
            <person name="Spiegler S."/>
            <person name="Tivey A."/>
            <person name="Sugano S."/>
            <person name="White B."/>
            <person name="Walker D."/>
            <person name="Woodward J.R."/>
            <person name="Winckler T."/>
            <person name="Tanaka Y."/>
            <person name="Shaulsky G."/>
            <person name="Schleicher M."/>
            <person name="Weinstock G.M."/>
            <person name="Rosenthal A."/>
            <person name="Cox E.C."/>
            <person name="Chisholm R.L."/>
            <person name="Gibbs R.A."/>
            <person name="Loomis W.F."/>
            <person name="Platzer M."/>
            <person name="Kay R.R."/>
            <person name="Williams J.G."/>
            <person name="Dear P.H."/>
            <person name="Noegel A.A."/>
            <person name="Barrell B.G."/>
            <person name="Kuspa A."/>
        </authorList>
    </citation>
    <scope>NUCLEOTIDE SEQUENCE [LARGE SCALE GENOMIC DNA]</scope>
    <source>
        <strain>AX4</strain>
    </source>
</reference>
<reference key="2">
    <citation type="journal article" date="2019" name="Elife">
        <title>A terpene synthase-cytochrome P450 cluster in Dictyostelium discoideum produces a novel trisnorsesquiterpene.</title>
        <authorList>
            <person name="Chen X."/>
            <person name="Luck K."/>
            <person name="Rabe P."/>
            <person name="Dinh C.Q."/>
            <person name="Shaulsky G."/>
            <person name="Nelson D.R."/>
            <person name="Gershenzon J."/>
            <person name="Dickschat J.S."/>
            <person name="Koellner T.G."/>
            <person name="Chen F."/>
        </authorList>
    </citation>
    <scope>INDUCTION</scope>
    <scope>FUNCTION</scope>
    <scope>CATALYTIC ACTIVITY</scope>
    <scope>PATHWAY</scope>
</reference>
<organism>
    <name type="scientific">Dictyostelium discoideum</name>
    <name type="common">Social amoeba</name>
    <dbReference type="NCBI Taxonomy" id="44689"/>
    <lineage>
        <taxon>Eukaryota</taxon>
        <taxon>Amoebozoa</taxon>
        <taxon>Evosea</taxon>
        <taxon>Eumycetozoa</taxon>
        <taxon>Dictyostelia</taxon>
        <taxon>Dictyosteliales</taxon>
        <taxon>Dictyosteliaceae</taxon>
        <taxon>Dictyostelium</taxon>
    </lineage>
</organism>
<proteinExistence type="evidence at protein level"/>
<feature type="chain" id="PRO_0000318839" description="Cytochrome P450 monooxygenase 521A1">
    <location>
        <begin position="1"/>
        <end position="491"/>
    </location>
</feature>
<feature type="transmembrane region" description="Helical" evidence="2">
    <location>
        <begin position="1"/>
        <end position="21"/>
    </location>
</feature>
<feature type="binding site" description="axial binding residue" evidence="1">
    <location>
        <position position="438"/>
    </location>
    <ligand>
        <name>heme</name>
        <dbReference type="ChEBI" id="CHEBI:30413"/>
    </ligand>
    <ligandPart>
        <name>Fe</name>
        <dbReference type="ChEBI" id="CHEBI:18248"/>
    </ligandPart>
</feature>
<sequence>MILLTLLYLIIFYIIIDFIKKNYKTKNQLPSPLGIALPIIGHLHLLRTDPYKTLAKASKKTEHGILKCWNGEHLMVVVDNPSIIKQMYVNTNNFTDRPQTKVFEIISRNYKNSGFANGEKWKHLRGLYAPSFTKIKSRPHENIILKYVNFEIKSLKNHAITNSIYNPFLIENINSFGTKVITEIIFGREFSENEVYSLIGPMNKLFGILDTPFPSESISFLKPFYRRSYKECDKQCEELFKLVEKVYDDHLLNLDKDNPKDVMDVMIVETDFKEKDHVICICCDLLMGTKDTFNTIVLWFFVLMINYQDVQLKGYQEIIKVLECTGRDHVTIEDIDKLPYIDGIIKEISRIHPAGPLSVPRTAINDIMINGYFIPKGCHVFQNTYGAVYNYMKESDEPCKMKPERWIENEKLRKDGKLDPTNDLALISLPFSSGIRNCPGVGFAEYELFLLFSNIILNFHLSSPNNLKLNESGHFGLTMKPFPFLVDLKLR</sequence>
<dbReference type="EC" id="1.14.-.-" evidence="3"/>
<dbReference type="EMBL" id="AAFI02000218">
    <property type="protein sequence ID" value="EAS66806.1"/>
    <property type="molecule type" value="Genomic_DNA"/>
</dbReference>
<dbReference type="RefSeq" id="XP_001134489.1">
    <property type="nucleotide sequence ID" value="XM_001134489.1"/>
</dbReference>
<dbReference type="SMR" id="Q1ZXA1"/>
<dbReference type="STRING" id="44689.Q1ZXA1"/>
<dbReference type="PaxDb" id="44689-DDB0233030"/>
<dbReference type="EnsemblProtists" id="EAS66806">
    <property type="protein sequence ID" value="EAS66806"/>
    <property type="gene ID" value="DDB_G0293738"/>
</dbReference>
<dbReference type="GeneID" id="8629378"/>
<dbReference type="KEGG" id="ddi:DDB_G0293738"/>
<dbReference type="dictyBase" id="DDB_G0293738">
    <property type="gene designation" value="cyp521A1"/>
</dbReference>
<dbReference type="VEuPathDB" id="AmoebaDB:DDB_G0293738"/>
<dbReference type="eggNOG" id="KOG0156">
    <property type="taxonomic scope" value="Eukaryota"/>
</dbReference>
<dbReference type="HOGENOM" id="CLU_001570_4_0_1"/>
<dbReference type="InParanoid" id="Q1ZXA1"/>
<dbReference type="OMA" id="QAIWGNL"/>
<dbReference type="PhylomeDB" id="Q1ZXA1"/>
<dbReference type="Reactome" id="R-DDI-211935">
    <property type="pathway name" value="Fatty acids"/>
</dbReference>
<dbReference type="Reactome" id="R-DDI-211945">
    <property type="pathway name" value="Phase I - Functionalization of compounds"/>
</dbReference>
<dbReference type="Reactome" id="R-DDI-211958">
    <property type="pathway name" value="Miscellaneous substrates"/>
</dbReference>
<dbReference type="Reactome" id="R-DDI-211981">
    <property type="pathway name" value="Xenobiotics"/>
</dbReference>
<dbReference type="Reactome" id="R-DDI-211999">
    <property type="pathway name" value="CYP2E1 reactions"/>
</dbReference>
<dbReference type="Reactome" id="R-DDI-2142670">
    <property type="pathway name" value="Synthesis of epoxy (EET) and dihydroxyeicosatrienoic acids (DHET)"/>
</dbReference>
<dbReference type="Reactome" id="R-DDI-2142816">
    <property type="pathway name" value="Synthesis of (16-20)-hydroxyeicosatetraenoic acids (HETE)"/>
</dbReference>
<dbReference type="Reactome" id="R-DDI-5423646">
    <property type="pathway name" value="Aflatoxin activation and detoxification"/>
</dbReference>
<dbReference type="Reactome" id="R-DDI-9027307">
    <property type="pathway name" value="Biosynthesis of maresin-like SPMs"/>
</dbReference>
<dbReference type="Reactome" id="R-DDI-9749641">
    <property type="pathway name" value="Aspirin ADME"/>
</dbReference>
<dbReference type="Reactome" id="R-DDI-9753281">
    <property type="pathway name" value="Paracetamol ADME"/>
</dbReference>
<dbReference type="PRO" id="PR:Q1ZXA1"/>
<dbReference type="Proteomes" id="UP000002195">
    <property type="component" value="Chromosome 6"/>
</dbReference>
<dbReference type="GO" id="GO:0016020">
    <property type="term" value="C:membrane"/>
    <property type="evidence" value="ECO:0007669"/>
    <property type="project" value="UniProtKB-SubCell"/>
</dbReference>
<dbReference type="GO" id="GO:0020037">
    <property type="term" value="F:heme binding"/>
    <property type="evidence" value="ECO:0007669"/>
    <property type="project" value="InterPro"/>
</dbReference>
<dbReference type="GO" id="GO:0005506">
    <property type="term" value="F:iron ion binding"/>
    <property type="evidence" value="ECO:0007669"/>
    <property type="project" value="InterPro"/>
</dbReference>
<dbReference type="GO" id="GO:0004497">
    <property type="term" value="F:monooxygenase activity"/>
    <property type="evidence" value="ECO:0007669"/>
    <property type="project" value="UniProtKB-KW"/>
</dbReference>
<dbReference type="GO" id="GO:0016705">
    <property type="term" value="F:oxidoreductase activity, acting on paired donors, with incorporation or reduction of molecular oxygen"/>
    <property type="evidence" value="ECO:0007669"/>
    <property type="project" value="InterPro"/>
</dbReference>
<dbReference type="CDD" id="cd20617">
    <property type="entry name" value="CYP1_2-like"/>
    <property type="match status" value="1"/>
</dbReference>
<dbReference type="FunFam" id="1.10.630.10:FF:000078">
    <property type="entry name" value="Probable cytochrome P450 515A1"/>
    <property type="match status" value="1"/>
</dbReference>
<dbReference type="Gene3D" id="1.10.630.10">
    <property type="entry name" value="Cytochrome P450"/>
    <property type="match status" value="1"/>
</dbReference>
<dbReference type="InterPro" id="IPR001128">
    <property type="entry name" value="Cyt_P450"/>
</dbReference>
<dbReference type="InterPro" id="IPR017972">
    <property type="entry name" value="Cyt_P450_CS"/>
</dbReference>
<dbReference type="InterPro" id="IPR002401">
    <property type="entry name" value="Cyt_P450_E_grp-I"/>
</dbReference>
<dbReference type="InterPro" id="IPR036396">
    <property type="entry name" value="Cyt_P450_sf"/>
</dbReference>
<dbReference type="InterPro" id="IPR050182">
    <property type="entry name" value="Cytochrome_P450_fam2"/>
</dbReference>
<dbReference type="PANTHER" id="PTHR24300">
    <property type="entry name" value="CYTOCHROME P450 508A4-RELATED"/>
    <property type="match status" value="1"/>
</dbReference>
<dbReference type="PANTHER" id="PTHR24300:SF157">
    <property type="entry name" value="CYTOCHROME P450 MONOOXYGENASE 521A1-RELATED"/>
    <property type="match status" value="1"/>
</dbReference>
<dbReference type="Pfam" id="PF00067">
    <property type="entry name" value="p450"/>
    <property type="match status" value="1"/>
</dbReference>
<dbReference type="PRINTS" id="PR00463">
    <property type="entry name" value="EP450I"/>
</dbReference>
<dbReference type="PRINTS" id="PR00385">
    <property type="entry name" value="P450"/>
</dbReference>
<dbReference type="SUPFAM" id="SSF48264">
    <property type="entry name" value="Cytochrome P450"/>
    <property type="match status" value="1"/>
</dbReference>
<dbReference type="PROSITE" id="PS00086">
    <property type="entry name" value="CYTOCHROME_P450"/>
    <property type="match status" value="1"/>
</dbReference>
<comment type="function">
    <text evidence="3">Cytochrome P450 monooxygenase; part of the gene cluster that mediates the biosynthesis of the trisnorsesquiterpene discodiene which has a function during later stages of multicellular development, during the transition from fingers to Mexican hats (PubMed:31063135). The terpene synthase tps8 converts its substrate farnesyl diphosphate (FDP) into the bicyclic sesquiterpene alcohol discoidol (PubMed:31063135). The cytochrome P450 monooxygenase cyp521A1 then catalyzes the oxidative degradation of discoidol to form the trisnorsesquiterpene discodiene (PubMed:31063135).</text>
</comment>
<comment type="catalytic activity">
    <reaction evidence="3">
        <text>discoidol + reduced [NADPH--hemoprotein reductase] + O2 = discodiene + acetone + oxidized [NADPH--hemoprotein reductase] + 2 H2O + H(+)</text>
        <dbReference type="Rhea" id="RHEA:74107"/>
        <dbReference type="Rhea" id="RHEA-COMP:11964"/>
        <dbReference type="Rhea" id="RHEA-COMP:11965"/>
        <dbReference type="ChEBI" id="CHEBI:15347"/>
        <dbReference type="ChEBI" id="CHEBI:15377"/>
        <dbReference type="ChEBI" id="CHEBI:15378"/>
        <dbReference type="ChEBI" id="CHEBI:15379"/>
        <dbReference type="ChEBI" id="CHEBI:57618"/>
        <dbReference type="ChEBI" id="CHEBI:58210"/>
        <dbReference type="ChEBI" id="CHEBI:192996"/>
        <dbReference type="ChEBI" id="CHEBI:193096"/>
    </reaction>
    <physiologicalReaction direction="left-to-right" evidence="3">
        <dbReference type="Rhea" id="RHEA:74108"/>
    </physiologicalReaction>
</comment>
<comment type="cofactor">
    <cofactor evidence="1">
        <name>heme</name>
        <dbReference type="ChEBI" id="CHEBI:30413"/>
    </cofactor>
</comment>
<comment type="pathway">
    <text evidence="3">Sesquiterpene biosynthesis.</text>
</comment>
<comment type="subcellular location">
    <subcellularLocation>
        <location evidence="5">Membrane</location>
        <topology evidence="5">Single-pass membrane protein</topology>
    </subcellularLocation>
</comment>
<comment type="induction">
    <text evidence="3">Expression is almost undetectable in vegetatively growing cells (PubMed:31063135). Small amounts of transcripts accumulate between 4-8 hrs of development, continue to accumulate until they peak at 16 hrs, and decline thereafter (PubMed:31063135).</text>
</comment>
<comment type="similarity">
    <text evidence="5">Belongs to the cytochrome P450 family.</text>
</comment>
<accession>Q1ZXA1</accession>
<gene>
    <name type="primary">cyp521A1</name>
    <name type="ORF">DDB_G0293738</name>
</gene>
<name>C521A_DICDI</name>